<organism>
    <name type="scientific">Arabidopsis thaliana</name>
    <name type="common">Mouse-ear cress</name>
    <dbReference type="NCBI Taxonomy" id="3702"/>
    <lineage>
        <taxon>Eukaryota</taxon>
        <taxon>Viridiplantae</taxon>
        <taxon>Streptophyta</taxon>
        <taxon>Embryophyta</taxon>
        <taxon>Tracheophyta</taxon>
        <taxon>Spermatophyta</taxon>
        <taxon>Magnoliopsida</taxon>
        <taxon>eudicotyledons</taxon>
        <taxon>Gunneridae</taxon>
        <taxon>Pentapetalae</taxon>
        <taxon>rosids</taxon>
        <taxon>malvids</taxon>
        <taxon>Brassicales</taxon>
        <taxon>Brassicaceae</taxon>
        <taxon>Camelineae</taxon>
        <taxon>Arabidopsis</taxon>
    </lineage>
</organism>
<sequence>MHPGNVWGGSLDAVDSDRIAAEEEERLRNTTEWDRGAIHSQRSELDETQQGWLLAPQDNWRKKKKKYVNLGCVSVSRTVFLWTVGSIAVLFLVVALPIIIVKSLPRHKSAPPPPDNYTLALHKALQFFDAQKSGKLPKKNKVSWRGDSGTKDGLPDVVGGLVGGYYDGGSNVKFHFPMAFSMTMLSWSLIEYSHKYKAIDEYDHMRDVLKWGTDYLLLTFNNSATRLDHIYTQVGGGLRDSESPDDIYCWQKPEDMSYDRPVLSSTSAADLGAEVSAALAAASIVFTDKPDYAKKLKKGAETLYPFFRSKSRRKRYSDGQPTAQAFYNSTSMFDEFMWAGAWLYYATGNKTYIQFATTPSVPQTAKAFANRPELMVPSWNNKLPGAMLLMTRYRLFLNPGFPYENMLNRYHNATGITMCAYLKQYNVFNRTSGGLMQLNLGKPRPLEYVAHASFLASLFADYLNSTGVPGWYCGPTFVENHVLKDFAQSQIDYILGDNPLKMSYVVGFGKKFPRRVHHRGATIPNDKKRRSCREGLKYRDTKNPNPNNITGAMVGGPNKFDEFHDLRNNYNASEPTLSGNAGLVAALVSLTSSGGQQIDKNTMFNSVPPLYSPTPPPPKAWKP</sequence>
<gene>
    <name type="primary">KOR2</name>
    <name type="ordered locus">At1g65610</name>
    <name type="ORF">F5I14.14</name>
</gene>
<name>GUN7_ARATH</name>
<keyword id="KW-0119">Carbohydrate metabolism</keyword>
<keyword id="KW-0961">Cell wall biogenesis/degradation</keyword>
<keyword id="KW-0136">Cellulose degradation</keyword>
<keyword id="KW-0325">Glycoprotein</keyword>
<keyword id="KW-0326">Glycosidase</keyword>
<keyword id="KW-0378">Hydrolase</keyword>
<keyword id="KW-0472">Membrane</keyword>
<keyword id="KW-0624">Polysaccharide degradation</keyword>
<keyword id="KW-1185">Reference proteome</keyword>
<keyword id="KW-0735">Signal-anchor</keyword>
<keyword id="KW-0812">Transmembrane</keyword>
<keyword id="KW-1133">Transmembrane helix</keyword>
<protein>
    <recommendedName>
        <fullName>Endoglucanase 7</fullName>
        <ecNumber>3.2.1.4</ecNumber>
    </recommendedName>
    <alternativeName>
        <fullName>Endo-1,4-beta glucanase 7</fullName>
    </alternativeName>
</protein>
<comment type="catalytic activity">
    <reaction>
        <text>Endohydrolysis of (1-&gt;4)-beta-D-glucosidic linkages in cellulose, lichenin and cereal beta-D-glucans.</text>
        <dbReference type="EC" id="3.2.1.4"/>
    </reaction>
</comment>
<comment type="subcellular location">
    <subcellularLocation>
        <location evidence="6">Membrane</location>
        <topology evidence="6">Single-pass type II membrane protein</topology>
    </subcellularLocation>
</comment>
<comment type="tissue specificity">
    <text evidence="5">Expressed in basal region of leaf blade and proximal parts of leaf and floral organ.</text>
</comment>
<comment type="developmental stage">
    <text evidence="5">Early expressed in the development of root hairs within the root differentiation zone. Expressed late in the development of leaf trichomes when the stalks and branches are expanded.</text>
</comment>
<comment type="similarity">
    <text evidence="4 6">Belongs to the glycosyl hydrolase 9 (cellulase E) family.</text>
</comment>
<dbReference type="EC" id="3.2.1.4"/>
<dbReference type="EMBL" id="AC001229">
    <property type="protein sequence ID" value="AAB60922.1"/>
    <property type="molecule type" value="Genomic_DNA"/>
</dbReference>
<dbReference type="EMBL" id="CP002684">
    <property type="protein sequence ID" value="AEE34400.1"/>
    <property type="molecule type" value="Genomic_DNA"/>
</dbReference>
<dbReference type="EMBL" id="AK229402">
    <property type="protein sequence ID" value="BAF01264.1"/>
    <property type="molecule type" value="mRNA"/>
</dbReference>
<dbReference type="PIR" id="B96681">
    <property type="entry name" value="B96681"/>
</dbReference>
<dbReference type="RefSeq" id="NP_176738.1">
    <property type="nucleotide sequence ID" value="NM_105234.3"/>
</dbReference>
<dbReference type="SMR" id="O04478"/>
<dbReference type="FunCoup" id="O04478">
    <property type="interactions" value="170"/>
</dbReference>
<dbReference type="STRING" id="3702.O04478"/>
<dbReference type="CAZy" id="GH9">
    <property type="family name" value="Glycoside Hydrolase Family 9"/>
</dbReference>
<dbReference type="GlyCosmos" id="O04478">
    <property type="glycosylation" value="9 sites, No reported glycans"/>
</dbReference>
<dbReference type="GlyGen" id="O04478">
    <property type="glycosylation" value="10 sites"/>
</dbReference>
<dbReference type="PaxDb" id="3702-AT1G65610.1"/>
<dbReference type="ProteomicsDB" id="247151"/>
<dbReference type="EnsemblPlants" id="AT1G65610.1">
    <property type="protein sequence ID" value="AT1G65610.1"/>
    <property type="gene ID" value="AT1G65610"/>
</dbReference>
<dbReference type="GeneID" id="842872"/>
<dbReference type="Gramene" id="AT1G65610.1">
    <property type="protein sequence ID" value="AT1G65610.1"/>
    <property type="gene ID" value="AT1G65610"/>
</dbReference>
<dbReference type="KEGG" id="ath:AT1G65610"/>
<dbReference type="Araport" id="AT1G65610"/>
<dbReference type="TAIR" id="AT1G65610">
    <property type="gene designation" value="KOR2"/>
</dbReference>
<dbReference type="eggNOG" id="ENOG502QSIM">
    <property type="taxonomic scope" value="Eukaryota"/>
</dbReference>
<dbReference type="HOGENOM" id="CLU_008926_1_3_1"/>
<dbReference type="InParanoid" id="O04478"/>
<dbReference type="OMA" id="MCSYLHQ"/>
<dbReference type="PhylomeDB" id="O04478"/>
<dbReference type="BioCyc" id="ARA:AT1G65610-MONOMER"/>
<dbReference type="PRO" id="PR:O04478"/>
<dbReference type="Proteomes" id="UP000006548">
    <property type="component" value="Chromosome 1"/>
</dbReference>
<dbReference type="ExpressionAtlas" id="O04478">
    <property type="expression patterns" value="baseline and differential"/>
</dbReference>
<dbReference type="GO" id="GO:0016020">
    <property type="term" value="C:membrane"/>
    <property type="evidence" value="ECO:0007669"/>
    <property type="project" value="UniProtKB-SubCell"/>
</dbReference>
<dbReference type="GO" id="GO:0008810">
    <property type="term" value="F:cellulase activity"/>
    <property type="evidence" value="ECO:0007669"/>
    <property type="project" value="UniProtKB-EC"/>
</dbReference>
<dbReference type="GO" id="GO:0071555">
    <property type="term" value="P:cell wall organization"/>
    <property type="evidence" value="ECO:0007669"/>
    <property type="project" value="UniProtKB-KW"/>
</dbReference>
<dbReference type="GO" id="GO:0030245">
    <property type="term" value="P:cellulose catabolic process"/>
    <property type="evidence" value="ECO:0007669"/>
    <property type="project" value="UniProtKB-KW"/>
</dbReference>
<dbReference type="Gene3D" id="1.50.10.10">
    <property type="match status" value="1"/>
</dbReference>
<dbReference type="InterPro" id="IPR008928">
    <property type="entry name" value="6-hairpin_glycosidase_sf"/>
</dbReference>
<dbReference type="InterPro" id="IPR012341">
    <property type="entry name" value="6hp_glycosidase-like_sf"/>
</dbReference>
<dbReference type="InterPro" id="IPR001701">
    <property type="entry name" value="Glyco_hydro_9"/>
</dbReference>
<dbReference type="InterPro" id="IPR033126">
    <property type="entry name" value="Glyco_hydro_9_Asp/Glu_AS"/>
</dbReference>
<dbReference type="InterPro" id="IPR018221">
    <property type="entry name" value="Glyco_hydro_9_His_AS"/>
</dbReference>
<dbReference type="PANTHER" id="PTHR22298">
    <property type="entry name" value="ENDO-1,4-BETA-GLUCANASE"/>
    <property type="match status" value="1"/>
</dbReference>
<dbReference type="Pfam" id="PF00759">
    <property type="entry name" value="Glyco_hydro_9"/>
    <property type="match status" value="1"/>
</dbReference>
<dbReference type="SUPFAM" id="SSF48208">
    <property type="entry name" value="Six-hairpin glycosidases"/>
    <property type="match status" value="1"/>
</dbReference>
<dbReference type="PROSITE" id="PS60032">
    <property type="entry name" value="GH9_1"/>
    <property type="match status" value="1"/>
</dbReference>
<dbReference type="PROSITE" id="PS00592">
    <property type="entry name" value="GH9_2"/>
    <property type="match status" value="1"/>
</dbReference>
<dbReference type="PROSITE" id="PS00698">
    <property type="entry name" value="GH9_3"/>
    <property type="match status" value="1"/>
</dbReference>
<feature type="chain" id="PRO_0000249260" description="Endoglucanase 7">
    <location>
        <begin position="1"/>
        <end position="623"/>
    </location>
</feature>
<feature type="topological domain" description="Cytoplasmic" evidence="1">
    <location>
        <begin position="1"/>
        <end position="79"/>
    </location>
</feature>
<feature type="transmembrane region" description="Helical; Signal-anchor for type II membrane protein" evidence="1">
    <location>
        <begin position="80"/>
        <end position="100"/>
    </location>
</feature>
<feature type="topological domain" description="Extracellular" evidence="1">
    <location>
        <begin position="101"/>
        <end position="623"/>
    </location>
</feature>
<feature type="active site" evidence="2">
    <location>
        <position position="517"/>
    </location>
</feature>
<feature type="active site" evidence="3">
    <location>
        <position position="565"/>
    </location>
</feature>
<feature type="active site" evidence="3">
    <location>
        <position position="574"/>
    </location>
</feature>
<feature type="glycosylation site" description="N-linked (GlcNAc...) asparagine" evidence="1">
    <location>
        <position position="116"/>
    </location>
</feature>
<feature type="glycosylation site" description="N-linked (GlcNAc...) asparagine" evidence="1">
    <location>
        <position position="221"/>
    </location>
</feature>
<feature type="glycosylation site" description="N-linked (GlcNAc...) asparagine" evidence="1">
    <location>
        <position position="328"/>
    </location>
</feature>
<feature type="glycosylation site" description="N-linked (GlcNAc...) asparagine" evidence="1">
    <location>
        <position position="349"/>
    </location>
</feature>
<feature type="glycosylation site" description="N-linked (GlcNAc...) asparagine" evidence="1">
    <location>
        <position position="412"/>
    </location>
</feature>
<feature type="glycosylation site" description="N-linked (GlcNAc...) asparagine" evidence="1">
    <location>
        <position position="429"/>
    </location>
</feature>
<feature type="glycosylation site" description="N-linked (GlcNAc...) asparagine" evidence="1">
    <location>
        <position position="464"/>
    </location>
</feature>
<feature type="glycosylation site" description="N-linked (GlcNAc...) asparagine" evidence="1">
    <location>
        <position position="548"/>
    </location>
</feature>
<feature type="glycosylation site" description="N-linked (GlcNAc...) asparagine" evidence="1">
    <location>
        <position position="571"/>
    </location>
</feature>
<evidence type="ECO:0000255" key="1"/>
<evidence type="ECO:0000255" key="2">
    <source>
        <dbReference type="PROSITE-ProRule" id="PRU10059"/>
    </source>
</evidence>
<evidence type="ECO:0000255" key="3">
    <source>
        <dbReference type="PROSITE-ProRule" id="PRU10060"/>
    </source>
</evidence>
<evidence type="ECO:0000255" key="4">
    <source>
        <dbReference type="PROSITE-ProRule" id="PRU10140"/>
    </source>
</evidence>
<evidence type="ECO:0000269" key="5">
    <source>
    </source>
</evidence>
<evidence type="ECO:0000305" key="6"/>
<accession>O04478</accession>
<reference key="1">
    <citation type="journal article" date="2000" name="Nature">
        <title>Sequence and analysis of chromosome 1 of the plant Arabidopsis thaliana.</title>
        <authorList>
            <person name="Theologis A."/>
            <person name="Ecker J.R."/>
            <person name="Palm C.J."/>
            <person name="Federspiel N.A."/>
            <person name="Kaul S."/>
            <person name="White O."/>
            <person name="Alonso J."/>
            <person name="Altafi H."/>
            <person name="Araujo R."/>
            <person name="Bowman C.L."/>
            <person name="Brooks S.Y."/>
            <person name="Buehler E."/>
            <person name="Chan A."/>
            <person name="Chao Q."/>
            <person name="Chen H."/>
            <person name="Cheuk R.F."/>
            <person name="Chin C.W."/>
            <person name="Chung M.K."/>
            <person name="Conn L."/>
            <person name="Conway A.B."/>
            <person name="Conway A.R."/>
            <person name="Creasy T.H."/>
            <person name="Dewar K."/>
            <person name="Dunn P."/>
            <person name="Etgu P."/>
            <person name="Feldblyum T.V."/>
            <person name="Feng J.-D."/>
            <person name="Fong B."/>
            <person name="Fujii C.Y."/>
            <person name="Gill J.E."/>
            <person name="Goldsmith A.D."/>
            <person name="Haas B."/>
            <person name="Hansen N.F."/>
            <person name="Hughes B."/>
            <person name="Huizar L."/>
            <person name="Hunter J.L."/>
            <person name="Jenkins J."/>
            <person name="Johnson-Hopson C."/>
            <person name="Khan S."/>
            <person name="Khaykin E."/>
            <person name="Kim C.J."/>
            <person name="Koo H.L."/>
            <person name="Kremenetskaia I."/>
            <person name="Kurtz D.B."/>
            <person name="Kwan A."/>
            <person name="Lam B."/>
            <person name="Langin-Hooper S."/>
            <person name="Lee A."/>
            <person name="Lee J.M."/>
            <person name="Lenz C.A."/>
            <person name="Li J.H."/>
            <person name="Li Y.-P."/>
            <person name="Lin X."/>
            <person name="Liu S.X."/>
            <person name="Liu Z.A."/>
            <person name="Luros J.S."/>
            <person name="Maiti R."/>
            <person name="Marziali A."/>
            <person name="Militscher J."/>
            <person name="Miranda M."/>
            <person name="Nguyen M."/>
            <person name="Nierman W.C."/>
            <person name="Osborne B.I."/>
            <person name="Pai G."/>
            <person name="Peterson J."/>
            <person name="Pham P.K."/>
            <person name="Rizzo M."/>
            <person name="Rooney T."/>
            <person name="Rowley D."/>
            <person name="Sakano H."/>
            <person name="Salzberg S.L."/>
            <person name="Schwartz J.R."/>
            <person name="Shinn P."/>
            <person name="Southwick A.M."/>
            <person name="Sun H."/>
            <person name="Tallon L.J."/>
            <person name="Tambunga G."/>
            <person name="Toriumi M.J."/>
            <person name="Town C.D."/>
            <person name="Utterback T."/>
            <person name="Van Aken S."/>
            <person name="Vaysberg M."/>
            <person name="Vysotskaia V.S."/>
            <person name="Walker M."/>
            <person name="Wu D."/>
            <person name="Yu G."/>
            <person name="Fraser C.M."/>
            <person name="Venter J.C."/>
            <person name="Davis R.W."/>
        </authorList>
    </citation>
    <scope>NUCLEOTIDE SEQUENCE [LARGE SCALE GENOMIC DNA]</scope>
    <source>
        <strain>cv. Columbia</strain>
    </source>
</reference>
<reference key="2">
    <citation type="journal article" date="2017" name="Plant J.">
        <title>Araport11: a complete reannotation of the Arabidopsis thaliana reference genome.</title>
        <authorList>
            <person name="Cheng C.Y."/>
            <person name="Krishnakumar V."/>
            <person name="Chan A.P."/>
            <person name="Thibaud-Nissen F."/>
            <person name="Schobel S."/>
            <person name="Town C.D."/>
        </authorList>
    </citation>
    <scope>GENOME REANNOTATION</scope>
    <source>
        <strain>cv. Columbia</strain>
    </source>
</reference>
<reference key="3">
    <citation type="submission" date="2006-07" db="EMBL/GenBank/DDBJ databases">
        <title>Large-scale analysis of RIKEN Arabidopsis full-length (RAFL) cDNAs.</title>
        <authorList>
            <person name="Totoki Y."/>
            <person name="Seki M."/>
            <person name="Ishida J."/>
            <person name="Nakajima M."/>
            <person name="Enju A."/>
            <person name="Kamiya A."/>
            <person name="Narusaka M."/>
            <person name="Shin-i T."/>
            <person name="Nakagawa M."/>
            <person name="Sakamoto N."/>
            <person name="Oishi K."/>
            <person name="Kohara Y."/>
            <person name="Kobayashi M."/>
            <person name="Toyoda A."/>
            <person name="Sakaki Y."/>
            <person name="Sakurai T."/>
            <person name="Iida K."/>
            <person name="Akiyama K."/>
            <person name="Satou M."/>
            <person name="Toyoda T."/>
            <person name="Konagaya A."/>
            <person name="Carninci P."/>
            <person name="Kawai J."/>
            <person name="Hayashizaki Y."/>
            <person name="Shinozaki K."/>
        </authorList>
    </citation>
    <scope>NUCLEOTIDE SEQUENCE [LARGE SCALE MRNA]</scope>
    <source>
        <strain>cv. Columbia</strain>
    </source>
</reference>
<reference key="4">
    <citation type="journal article" date="2001" name="Plant Mol. Biol.">
        <title>Two Arabidopsis thaliana genes, KOR2 and KOR3, which encode membrane-anchored endo-1,4-beta-D-glucanases, are differentially expressed in developing leaf trichomes and their support cells.</title>
        <authorList>
            <person name="Moelhoej M."/>
            <person name="Joergensen B."/>
            <person name="Ulvskov P."/>
            <person name="Borkhardt B."/>
        </authorList>
    </citation>
    <scope>TISSUE SPECIFICITY</scope>
    <scope>DEVELOPMENTAL STAGE</scope>
</reference>
<reference key="5">
    <citation type="journal article" date="2004" name="J. Mol. Evol.">
        <title>Phylogenetic analysis of the plant endo-beta-1,4-glucanase gene family.</title>
        <authorList>
            <person name="Libertini E."/>
            <person name="Li Y."/>
            <person name="McQueen-Mason S.J."/>
        </authorList>
    </citation>
    <scope>GENE FAMILY</scope>
</reference>
<proteinExistence type="evidence at transcript level"/>